<organism>
    <name type="scientific">Pseudomonas fluorescens (strain Pf0-1)</name>
    <dbReference type="NCBI Taxonomy" id="205922"/>
    <lineage>
        <taxon>Bacteria</taxon>
        <taxon>Pseudomonadati</taxon>
        <taxon>Pseudomonadota</taxon>
        <taxon>Gammaproteobacteria</taxon>
        <taxon>Pseudomonadales</taxon>
        <taxon>Pseudomonadaceae</taxon>
        <taxon>Pseudomonas</taxon>
    </lineage>
</organism>
<dbReference type="EC" id="6.3.2.8" evidence="1"/>
<dbReference type="EMBL" id="CP000094">
    <property type="protein sequence ID" value="ABA76409.1"/>
    <property type="molecule type" value="Genomic_DNA"/>
</dbReference>
<dbReference type="RefSeq" id="WP_011335862.1">
    <property type="nucleotide sequence ID" value="NC_007492.2"/>
</dbReference>
<dbReference type="SMR" id="Q3K745"/>
<dbReference type="KEGG" id="pfo:Pfl01_4672"/>
<dbReference type="eggNOG" id="COG0773">
    <property type="taxonomic scope" value="Bacteria"/>
</dbReference>
<dbReference type="HOGENOM" id="CLU_028104_2_2_6"/>
<dbReference type="UniPathway" id="UPA00219"/>
<dbReference type="Proteomes" id="UP000002704">
    <property type="component" value="Chromosome"/>
</dbReference>
<dbReference type="GO" id="GO:0005737">
    <property type="term" value="C:cytoplasm"/>
    <property type="evidence" value="ECO:0007669"/>
    <property type="project" value="UniProtKB-SubCell"/>
</dbReference>
<dbReference type="GO" id="GO:0005524">
    <property type="term" value="F:ATP binding"/>
    <property type="evidence" value="ECO:0007669"/>
    <property type="project" value="UniProtKB-UniRule"/>
</dbReference>
<dbReference type="GO" id="GO:0008763">
    <property type="term" value="F:UDP-N-acetylmuramate-L-alanine ligase activity"/>
    <property type="evidence" value="ECO:0007669"/>
    <property type="project" value="UniProtKB-UniRule"/>
</dbReference>
<dbReference type="GO" id="GO:0051301">
    <property type="term" value="P:cell division"/>
    <property type="evidence" value="ECO:0007669"/>
    <property type="project" value="UniProtKB-KW"/>
</dbReference>
<dbReference type="GO" id="GO:0071555">
    <property type="term" value="P:cell wall organization"/>
    <property type="evidence" value="ECO:0007669"/>
    <property type="project" value="UniProtKB-KW"/>
</dbReference>
<dbReference type="GO" id="GO:0009252">
    <property type="term" value="P:peptidoglycan biosynthetic process"/>
    <property type="evidence" value="ECO:0007669"/>
    <property type="project" value="UniProtKB-UniRule"/>
</dbReference>
<dbReference type="GO" id="GO:0008360">
    <property type="term" value="P:regulation of cell shape"/>
    <property type="evidence" value="ECO:0007669"/>
    <property type="project" value="UniProtKB-KW"/>
</dbReference>
<dbReference type="FunFam" id="3.40.1190.10:FF:000001">
    <property type="entry name" value="UDP-N-acetylmuramate--L-alanine ligase"/>
    <property type="match status" value="1"/>
</dbReference>
<dbReference type="Gene3D" id="3.90.190.20">
    <property type="entry name" value="Mur ligase, C-terminal domain"/>
    <property type="match status" value="1"/>
</dbReference>
<dbReference type="Gene3D" id="3.40.1190.10">
    <property type="entry name" value="Mur-like, catalytic domain"/>
    <property type="match status" value="1"/>
</dbReference>
<dbReference type="Gene3D" id="3.40.50.720">
    <property type="entry name" value="NAD(P)-binding Rossmann-like Domain"/>
    <property type="match status" value="1"/>
</dbReference>
<dbReference type="HAMAP" id="MF_00046">
    <property type="entry name" value="MurC"/>
    <property type="match status" value="1"/>
</dbReference>
<dbReference type="InterPro" id="IPR036565">
    <property type="entry name" value="Mur-like_cat_sf"/>
</dbReference>
<dbReference type="InterPro" id="IPR004101">
    <property type="entry name" value="Mur_ligase_C"/>
</dbReference>
<dbReference type="InterPro" id="IPR036615">
    <property type="entry name" value="Mur_ligase_C_dom_sf"/>
</dbReference>
<dbReference type="InterPro" id="IPR013221">
    <property type="entry name" value="Mur_ligase_cen"/>
</dbReference>
<dbReference type="InterPro" id="IPR000713">
    <property type="entry name" value="Mur_ligase_N"/>
</dbReference>
<dbReference type="InterPro" id="IPR050061">
    <property type="entry name" value="MurCDEF_pg_biosynth"/>
</dbReference>
<dbReference type="InterPro" id="IPR005758">
    <property type="entry name" value="UDP-N-AcMur_Ala_ligase_MurC"/>
</dbReference>
<dbReference type="NCBIfam" id="TIGR01082">
    <property type="entry name" value="murC"/>
    <property type="match status" value="1"/>
</dbReference>
<dbReference type="PANTHER" id="PTHR43445:SF3">
    <property type="entry name" value="UDP-N-ACETYLMURAMATE--L-ALANINE LIGASE"/>
    <property type="match status" value="1"/>
</dbReference>
<dbReference type="PANTHER" id="PTHR43445">
    <property type="entry name" value="UDP-N-ACETYLMURAMATE--L-ALANINE LIGASE-RELATED"/>
    <property type="match status" value="1"/>
</dbReference>
<dbReference type="Pfam" id="PF01225">
    <property type="entry name" value="Mur_ligase"/>
    <property type="match status" value="1"/>
</dbReference>
<dbReference type="Pfam" id="PF02875">
    <property type="entry name" value="Mur_ligase_C"/>
    <property type="match status" value="1"/>
</dbReference>
<dbReference type="Pfam" id="PF08245">
    <property type="entry name" value="Mur_ligase_M"/>
    <property type="match status" value="1"/>
</dbReference>
<dbReference type="SUPFAM" id="SSF51984">
    <property type="entry name" value="MurCD N-terminal domain"/>
    <property type="match status" value="1"/>
</dbReference>
<dbReference type="SUPFAM" id="SSF53623">
    <property type="entry name" value="MurD-like peptide ligases, catalytic domain"/>
    <property type="match status" value="1"/>
</dbReference>
<dbReference type="SUPFAM" id="SSF53244">
    <property type="entry name" value="MurD-like peptide ligases, peptide-binding domain"/>
    <property type="match status" value="1"/>
</dbReference>
<protein>
    <recommendedName>
        <fullName evidence="1">UDP-N-acetylmuramate--L-alanine ligase</fullName>
        <ecNumber evidence="1">6.3.2.8</ecNumber>
    </recommendedName>
    <alternativeName>
        <fullName evidence="1">UDP-N-acetylmuramoyl-L-alanine synthetase</fullName>
    </alternativeName>
</protein>
<evidence type="ECO:0000255" key="1">
    <source>
        <dbReference type="HAMAP-Rule" id="MF_00046"/>
    </source>
</evidence>
<gene>
    <name evidence="1" type="primary">murC</name>
    <name type="ordered locus">Pfl01_4672</name>
</gene>
<keyword id="KW-0067">ATP-binding</keyword>
<keyword id="KW-0131">Cell cycle</keyword>
<keyword id="KW-0132">Cell division</keyword>
<keyword id="KW-0133">Cell shape</keyword>
<keyword id="KW-0961">Cell wall biogenesis/degradation</keyword>
<keyword id="KW-0963">Cytoplasm</keyword>
<keyword id="KW-0436">Ligase</keyword>
<keyword id="KW-0547">Nucleotide-binding</keyword>
<keyword id="KW-0573">Peptidoglycan synthesis</keyword>
<comment type="function">
    <text evidence="1">Cell wall formation.</text>
</comment>
<comment type="catalytic activity">
    <reaction evidence="1">
        <text>UDP-N-acetyl-alpha-D-muramate + L-alanine + ATP = UDP-N-acetyl-alpha-D-muramoyl-L-alanine + ADP + phosphate + H(+)</text>
        <dbReference type="Rhea" id="RHEA:23372"/>
        <dbReference type="ChEBI" id="CHEBI:15378"/>
        <dbReference type="ChEBI" id="CHEBI:30616"/>
        <dbReference type="ChEBI" id="CHEBI:43474"/>
        <dbReference type="ChEBI" id="CHEBI:57972"/>
        <dbReference type="ChEBI" id="CHEBI:70757"/>
        <dbReference type="ChEBI" id="CHEBI:83898"/>
        <dbReference type="ChEBI" id="CHEBI:456216"/>
        <dbReference type="EC" id="6.3.2.8"/>
    </reaction>
</comment>
<comment type="pathway">
    <text evidence="1">Cell wall biogenesis; peptidoglycan biosynthesis.</text>
</comment>
<comment type="subcellular location">
    <subcellularLocation>
        <location evidence="1">Cytoplasm</location>
    </subcellularLocation>
</comment>
<comment type="similarity">
    <text evidence="1">Belongs to the MurCDEF family.</text>
</comment>
<feature type="chain" id="PRO_0000242577" description="UDP-N-acetylmuramate--L-alanine ligase">
    <location>
        <begin position="1"/>
        <end position="486"/>
    </location>
</feature>
<feature type="binding site" evidence="1">
    <location>
        <begin position="123"/>
        <end position="129"/>
    </location>
    <ligand>
        <name>ATP</name>
        <dbReference type="ChEBI" id="CHEBI:30616"/>
    </ligand>
</feature>
<name>MURC_PSEPF</name>
<accession>Q3K745</accession>
<proteinExistence type="inferred from homology"/>
<reference key="1">
    <citation type="journal article" date="2009" name="Genome Biol.">
        <title>Genomic and genetic analyses of diversity and plant interactions of Pseudomonas fluorescens.</title>
        <authorList>
            <person name="Silby M.W."/>
            <person name="Cerdeno-Tarraga A.M."/>
            <person name="Vernikos G.S."/>
            <person name="Giddens S.R."/>
            <person name="Jackson R.W."/>
            <person name="Preston G.M."/>
            <person name="Zhang X.-X."/>
            <person name="Moon C.D."/>
            <person name="Gehrig S.M."/>
            <person name="Godfrey S.A.C."/>
            <person name="Knight C.G."/>
            <person name="Malone J.G."/>
            <person name="Robinson Z."/>
            <person name="Spiers A.J."/>
            <person name="Harris S."/>
            <person name="Challis G.L."/>
            <person name="Yaxley A.M."/>
            <person name="Harris D."/>
            <person name="Seeger K."/>
            <person name="Murphy L."/>
            <person name="Rutter S."/>
            <person name="Squares R."/>
            <person name="Quail M.A."/>
            <person name="Saunders E."/>
            <person name="Mavromatis K."/>
            <person name="Brettin T.S."/>
            <person name="Bentley S.D."/>
            <person name="Hothersall J."/>
            <person name="Stephens E."/>
            <person name="Thomas C.M."/>
            <person name="Parkhill J."/>
            <person name="Levy S.B."/>
            <person name="Rainey P.B."/>
            <person name="Thomson N.R."/>
        </authorList>
    </citation>
    <scope>NUCLEOTIDE SEQUENCE [LARGE SCALE GENOMIC DNA]</scope>
    <source>
        <strain>Pf0-1</strain>
    </source>
</reference>
<sequence>MVENQKAMPQPEMRRIRRIHFVGIGGVGMCGIAEVLLNLGYEVSGSDLKASPVTERLESFGAQIFIGHRAENAAAADVLVVSSAVNTSNPEVATALERRIPVVPRAEMLAELMRYRHGIAVAGTHGKTTTTSLIASVFAAGGLDPTFVIGGRLNAAGTNAQLGTSRYLIAEADESDASFLHLQPLVAVVTNIDADHMATYDGDFNKLKKTFVEFLHNLPFYGLAVMCLDDPVVREILPLVKRPTVTYGFSEDADVRAINVRQQGMQTFFTVLRPDREPLDVSVNMPGNHNVLNSLATICIATDEGVSDEAIVQGLSGFQGVGRRFQVYGELPVDGGNVMLVDDYGHHPTEVAAVIKAVRGGWPERRLVMVYQPHRYSRTRDLYDDFVNVLADANVLLLMEVYPAGEEPIPGADSRKLCNSIRQRGQLDPIYIERGVDLAPLVKPLLRAGDILLCQGAGDIGGLAPKLLKSELFAGAVAASVEGKLK</sequence>